<sequence length="1237" mass="134491">MASTSGALVDDNVLEVLRKAQLDAFISQFVFLFNVRRFDHFSHVRDKDMLEIGMQQVQIRQLREQILKMSREMWNRSDPKQVYIQADQSMPAQNSIDEKALIPNEQIKLYELIGEGSFAVVKRGTWTQSNGTHVNVAVKILRDISPNIMDDLRVEASHLLKLQHPSLIRLYGIVRQPAMMVFELCEGGSLLDRLRDDKKAILLVSRLHDYCMQIAKALQFLESKHCVHRDVAARNILLARDERTVKICDFGLMRALKENEQMYTMAPQKKVPFAWCPPEALRHRKFSHASDVWSYGVTIWEVFTFGEEPWVGCRAIDVLKNIDAGERLEKPKYCSERIYQIMKNCWKFNPAERCKFGAIREDLVAAMFLDAVARETYNSIQPGALQLTKGDEVVVVENTGQDWFGQNKKNQKFGTFPRSVVFAQTNNAVAAATAVTPQKVPTAPTIRIPPSHPPPAPLKPLNNNTKTSLNDRTSKISMPVAGSFIHTGHGDPLGGQSWGNPATIADMYLKNPVNGAPLSSMSSGAEIIASKELLTNGGRSTHQPAAPSPAVMSKIRGLSLDLPEYDDFDRAFDDGFSPSKIELPREFCGNDSVISGGSNSIGLANTYVMEPPKQAFDIRGNRVLPPTNKAPVLIPTNPAPSVISSTASAGITLSTNSSQMFTSQDRHSNMPANLFPELQHRLNQGSSTGNGVRPRPASSIGIQNNDLSMLNPQVNRPFSVVNVPIVQQPANIPCLVPTPAPPAPAHFSQPVSSQRVAQQQQNTLQKALNDELKGNLNKRPTGTTAPPSNGFNAPRADVAPVQQRPISSASIPALQPQPIQHIQKPIQPQQVRIPPSTAPVQKPVQVSAPTHSNVAPTTSSQASADARNPLPPKTSPPVSNTPITVAPVHAAPTTSAPSTSVVTRRPTSTTAQMSDEERRSRIAMDISSALPAPSALLYGSNSTSSLPSAAVSTASSVPSTARDNPVETRPSQPHVTMPPKKSSEPILSSEVLQPTRLPSATTSQAKPVTQPIRHPSPPVATVIPTAVVDKKPVSQNQGSNVPLFNITNSSNGYPQLNGYPNYGNGFQAYGYGMNYHQGYPGYQGYNSYGNGMGQLALTHNAVTSLPPLVPSENRFSGTAQPLGESDIMEFLGTQQRQAGSSSRAVPPASASTSAASGITDLSMADKMEVLYREADFTHKGNCDTMVSQCNGNTEQALKLLKQQHLVDMELAMSTETARQALEARQYDLPAAANMLLG</sequence>
<protein>
    <recommendedName>
        <fullName>Tyrosine-protein kinase sid-3</fullName>
        <ecNumber>2.7.10.2</ecNumber>
    </recommendedName>
    <alternativeName>
        <fullName>Systemic RNA interference defective protein 3</fullName>
    </alternativeName>
    <alternativeName>
        <fullName>Systemic RNAi enabling protein</fullName>
    </alternativeName>
</protein>
<name>SID3_CAEEL</name>
<comment type="function">
    <text evidence="5">Tyrosine-protein kinase which plays a role in RNA-mediated gene silencing by mediating import of double-stranded RNA (dsRNA) into cells. Not required for import of ingested dsRNA into intestinal cells but involved in subsequent export from intestinal cells to internal tissues.</text>
</comment>
<comment type="catalytic activity">
    <reaction evidence="3">
        <text>L-tyrosyl-[protein] + ATP = O-phospho-L-tyrosyl-[protein] + ADP + H(+)</text>
        <dbReference type="Rhea" id="RHEA:10596"/>
        <dbReference type="Rhea" id="RHEA-COMP:10136"/>
        <dbReference type="Rhea" id="RHEA-COMP:20101"/>
        <dbReference type="ChEBI" id="CHEBI:15378"/>
        <dbReference type="ChEBI" id="CHEBI:30616"/>
        <dbReference type="ChEBI" id="CHEBI:46858"/>
        <dbReference type="ChEBI" id="CHEBI:61978"/>
        <dbReference type="ChEBI" id="CHEBI:456216"/>
        <dbReference type="EC" id="2.7.10.2"/>
    </reaction>
</comment>
<comment type="subcellular location">
    <subcellularLocation>
        <location evidence="5">Cytoplasm</location>
    </subcellularLocation>
    <text>Displays diffuse localization in cytoplasm and cytoplasmic foci, and also in a punctate pattern.</text>
</comment>
<comment type="alternative products">
    <event type="alternative splicing"/>
    <isoform>
        <id>Q10925-1</id>
        <name>a</name>
        <sequence type="displayed"/>
    </isoform>
    <isoform>
        <id>Q10925-2</id>
        <name>b</name>
        <sequence type="described" ref="VSP_004999"/>
    </isoform>
    <isoform>
        <id>Q10925-3</id>
        <name>c</name>
        <sequence type="described" ref="VSP_014534 VSP_014535"/>
    </isoform>
</comment>
<comment type="tissue specificity">
    <text evidence="5">Ubiquitously present in all tissues tested. Expressed in the somatic cells of gut, pharynx, body wall muscle, neurons, skin and excretory canal cells.</text>
</comment>
<comment type="developmental stage">
    <text evidence="5">Expressed throughout all developmental stages.</text>
</comment>
<comment type="domain">
    <text evidence="5">The kinase domain is required for import of dsRNA into cells.</text>
</comment>
<comment type="disruption phenotype">
    <text evidence="5">Defective in transport of silencing RNAs but not defective in execution of RNAi. Marginal enhancement of cell-autonomous RNAi. Mildly defective in silencing the intestine-expressed gene, act-5.</text>
</comment>
<comment type="similarity">
    <text evidence="1">Belongs to the protein kinase superfamily. Tyr protein kinase family. SYK/ZAP-70 subfamily.</text>
</comment>
<accession>Q10925</accession>
<accession>Q7JP57</accession>
<accession>Q7JP58</accession>
<accession>Q7JP59</accession>
<accession>Q95ZZ7</accession>
<proteinExistence type="evidence at protein level"/>
<evidence type="ECO:0000255" key="1">
    <source>
        <dbReference type="PROSITE-ProRule" id="PRU00159"/>
    </source>
</evidence>
<evidence type="ECO:0000255" key="2">
    <source>
        <dbReference type="PROSITE-ProRule" id="PRU00192"/>
    </source>
</evidence>
<evidence type="ECO:0000255" key="3">
    <source>
        <dbReference type="PROSITE-ProRule" id="PRU10028"/>
    </source>
</evidence>
<evidence type="ECO:0000256" key="4">
    <source>
        <dbReference type="SAM" id="MobiDB-lite"/>
    </source>
</evidence>
<evidence type="ECO:0000269" key="5">
    <source>
    </source>
</evidence>
<evidence type="ECO:0000305" key="6"/>
<feature type="chain" id="PRO_0000088119" description="Tyrosine-protein kinase sid-3">
    <location>
        <begin position="1"/>
        <end position="1237"/>
    </location>
</feature>
<feature type="domain" description="Protein kinase" evidence="1">
    <location>
        <begin position="107"/>
        <end position="369"/>
    </location>
</feature>
<feature type="domain" description="SH3" evidence="2">
    <location>
        <begin position="366"/>
        <end position="426"/>
    </location>
</feature>
<feature type="region of interest" description="Disordered" evidence="4">
    <location>
        <begin position="683"/>
        <end position="704"/>
    </location>
</feature>
<feature type="region of interest" description="Disordered" evidence="4">
    <location>
        <begin position="741"/>
        <end position="802"/>
    </location>
</feature>
<feature type="region of interest" description="Disordered" evidence="4">
    <location>
        <begin position="826"/>
        <end position="919"/>
    </location>
</feature>
<feature type="region of interest" description="Disordered" evidence="4">
    <location>
        <begin position="940"/>
        <end position="986"/>
    </location>
</feature>
<feature type="region of interest" description="Disordered" evidence="4">
    <location>
        <begin position="999"/>
        <end position="1018"/>
    </location>
</feature>
<feature type="region of interest" description="Disordered" evidence="4">
    <location>
        <begin position="1134"/>
        <end position="1156"/>
    </location>
</feature>
<feature type="compositionally biased region" description="Polar residues" evidence="4">
    <location>
        <begin position="749"/>
        <end position="766"/>
    </location>
</feature>
<feature type="compositionally biased region" description="Polar residues" evidence="4">
    <location>
        <begin position="778"/>
        <end position="791"/>
    </location>
</feature>
<feature type="compositionally biased region" description="Polar residues" evidence="4">
    <location>
        <begin position="847"/>
        <end position="863"/>
    </location>
</feature>
<feature type="compositionally biased region" description="Low complexity" evidence="4">
    <location>
        <begin position="881"/>
        <end position="910"/>
    </location>
</feature>
<feature type="compositionally biased region" description="Low complexity" evidence="4">
    <location>
        <begin position="940"/>
        <end position="961"/>
    </location>
</feature>
<feature type="compositionally biased region" description="Low complexity" evidence="4">
    <location>
        <begin position="1138"/>
        <end position="1156"/>
    </location>
</feature>
<feature type="active site" description="Proton acceptor" evidence="1 3">
    <location>
        <position position="230"/>
    </location>
</feature>
<feature type="binding site" evidence="1">
    <location>
        <begin position="113"/>
        <end position="121"/>
    </location>
    <ligand>
        <name>ATP</name>
        <dbReference type="ChEBI" id="CHEBI:30616"/>
    </ligand>
</feature>
<feature type="binding site" evidence="1">
    <location>
        <position position="139"/>
    </location>
    <ligand>
        <name>ATP</name>
        <dbReference type="ChEBI" id="CHEBI:30616"/>
    </ligand>
</feature>
<feature type="splice variant" id="VSP_014534" description="In isoform c." evidence="6">
    <original>IKLYELIGEGSFAVVKRGTWTQSNGTHVNVAVKILRDISPNIMDDLRVEASHLLKLQHPSLIRLYGIVRQPAMMVFELCEGGSLLDRLRDDKKAILLVSRLHDYC</original>
    <variation>TLHRSNSDRSHRHLFQRSNHNPFNTFRSLSNRNKFVYRHQQLPFRNQFKSQLLPIVMWHPQLHLKRLQMHAIRYLQKQAHQLATRLSQLLLFTRHQLLRHHQLRC</variation>
    <location>
        <begin position="107"/>
        <end position="211"/>
    </location>
</feature>
<feature type="splice variant" id="VSP_014535" description="In isoform c." evidence="6">
    <location>
        <begin position="212"/>
        <end position="1045"/>
    </location>
</feature>
<feature type="splice variant" id="VSP_004999" description="In isoform b." evidence="6">
    <location>
        <begin position="482"/>
        <end position="588"/>
    </location>
</feature>
<feature type="mutagenesis site" description="In qt32; induces defects in mobile RNA silencing." evidence="5">
    <original>G</original>
    <variation>D</variation>
    <location>
        <position position="124"/>
    </location>
</feature>
<feature type="mutagenesis site" description="Failure to rescue silencing defect in sid-3 mutants." evidence="5">
    <original>K</original>
    <variation>A</variation>
    <location>
        <position position="139"/>
    </location>
</feature>
<feature type="mutagenesis site" description="In qt38; induces defects in mobile RNA silencing." evidence="5">
    <original>R</original>
    <variation>Q</variation>
    <location>
        <position position="353"/>
    </location>
</feature>
<reference key="1">
    <citation type="journal article" date="1998" name="Science">
        <title>Genome sequence of the nematode C. elegans: a platform for investigating biology.</title>
        <authorList>
            <consortium name="The C. elegans sequencing consortium"/>
        </authorList>
    </citation>
    <scope>NUCLEOTIDE SEQUENCE [LARGE SCALE GENOMIC DNA]</scope>
    <scope>ALTERNATIVE SPLICING</scope>
    <source>
        <strain>Bristol N2</strain>
    </source>
</reference>
<reference key="2">
    <citation type="journal article" date="2012" name="Proc. Natl. Acad. Sci. U.S.A.">
        <title>Conserved tyrosine kinase promotes the import of silencing RNA into Caenorhabditis elegans cells.</title>
        <authorList>
            <person name="Jose A.M."/>
            <person name="Kim Y.A."/>
            <person name="Leal-Ekman S."/>
            <person name="Hunter C.P."/>
        </authorList>
    </citation>
    <scope>FUNCTION</scope>
    <scope>SUBCELLULAR LOCATION</scope>
    <scope>TISSUE SPECIFICITY</scope>
    <scope>DEVELOPMENTAL STAGE</scope>
    <scope>DOMAIN</scope>
    <scope>DISRUPTION PHENOTYPE</scope>
    <scope>MUTAGENESIS OF GLY-124; LYS-139 AND ARG-353</scope>
</reference>
<gene>
    <name type="primary">sid-3</name>
    <name type="ORF">B0302.1</name>
</gene>
<organism>
    <name type="scientific">Caenorhabditis elegans</name>
    <dbReference type="NCBI Taxonomy" id="6239"/>
    <lineage>
        <taxon>Eukaryota</taxon>
        <taxon>Metazoa</taxon>
        <taxon>Ecdysozoa</taxon>
        <taxon>Nematoda</taxon>
        <taxon>Chromadorea</taxon>
        <taxon>Rhabditida</taxon>
        <taxon>Rhabditina</taxon>
        <taxon>Rhabditomorpha</taxon>
        <taxon>Rhabditoidea</taxon>
        <taxon>Rhabditidae</taxon>
        <taxon>Peloderinae</taxon>
        <taxon>Caenorhabditis</taxon>
    </lineage>
</organism>
<keyword id="KW-0025">Alternative splicing</keyword>
<keyword id="KW-0067">ATP-binding</keyword>
<keyword id="KW-0963">Cytoplasm</keyword>
<keyword id="KW-0418">Kinase</keyword>
<keyword id="KW-0547">Nucleotide-binding</keyword>
<keyword id="KW-1185">Reference proteome</keyword>
<keyword id="KW-0943">RNA-mediated gene silencing</keyword>
<keyword id="KW-0728">SH3 domain</keyword>
<keyword id="KW-0808">Transferase</keyword>
<keyword id="KW-0829">Tyrosine-protein kinase</keyword>
<dbReference type="EC" id="2.7.10.2"/>
<dbReference type="EMBL" id="FO080160">
    <property type="protein sequence ID" value="CCD61695.1"/>
    <property type="molecule type" value="Genomic_DNA"/>
</dbReference>
<dbReference type="EMBL" id="FO080160">
    <property type="protein sequence ID" value="CCD61696.1"/>
    <property type="molecule type" value="Genomic_DNA"/>
</dbReference>
<dbReference type="EMBL" id="FO080160">
    <property type="protein sequence ID" value="CCD61697.1"/>
    <property type="molecule type" value="Genomic_DNA"/>
</dbReference>
<dbReference type="PIR" id="T15316">
    <property type="entry name" value="T15316"/>
</dbReference>
<dbReference type="RefSeq" id="NP_510783.2">
    <molecule id="Q10925-1"/>
    <property type="nucleotide sequence ID" value="NM_078382.7"/>
</dbReference>
<dbReference type="RefSeq" id="NP_510784.2">
    <molecule id="Q10925-2"/>
    <property type="nucleotide sequence ID" value="NM_078383.7"/>
</dbReference>
<dbReference type="SMR" id="Q10925"/>
<dbReference type="BioGRID" id="46633">
    <property type="interactions" value="1"/>
</dbReference>
<dbReference type="FunCoup" id="Q10925">
    <property type="interactions" value="23"/>
</dbReference>
<dbReference type="STRING" id="6239.B0302.1a.1"/>
<dbReference type="iPTMnet" id="Q10925"/>
<dbReference type="PaxDb" id="6239-B0302.1a.2"/>
<dbReference type="PeptideAtlas" id="Q10925"/>
<dbReference type="EnsemblMetazoa" id="B0302.1a.1">
    <molecule id="Q10925-1"/>
    <property type="protein sequence ID" value="B0302.1a.1"/>
    <property type="gene ID" value="WBGene00002207"/>
</dbReference>
<dbReference type="EnsemblMetazoa" id="B0302.1b.1">
    <molecule id="Q10925-2"/>
    <property type="protein sequence ID" value="B0302.1b.1"/>
    <property type="gene ID" value="WBGene00002207"/>
</dbReference>
<dbReference type="GeneID" id="181756"/>
<dbReference type="KEGG" id="cel:CELE_B0302.1"/>
<dbReference type="UCSC" id="B0302.1b">
    <molecule id="Q10925-1"/>
    <property type="organism name" value="c. elegans"/>
</dbReference>
<dbReference type="AGR" id="WB:WBGene00002207"/>
<dbReference type="CTD" id="181756"/>
<dbReference type="WormBase" id="B0302.1a">
    <molecule id="Q10925-1"/>
    <property type="protein sequence ID" value="CE33506"/>
    <property type="gene ID" value="WBGene00002207"/>
    <property type="gene designation" value="sid-3"/>
</dbReference>
<dbReference type="WormBase" id="B0302.1b">
    <molecule id="Q10925-2"/>
    <property type="protein sequence ID" value="CE33548"/>
    <property type="gene ID" value="WBGene00002207"/>
    <property type="gene designation" value="sid-3"/>
</dbReference>
<dbReference type="eggNOG" id="KOG0199">
    <property type="taxonomic scope" value="Eukaryota"/>
</dbReference>
<dbReference type="HOGENOM" id="CLU_009070_0_0_1"/>
<dbReference type="InParanoid" id="Q10925"/>
<dbReference type="OMA" id="FLESKHC"/>
<dbReference type="OrthoDB" id="635774at2759"/>
<dbReference type="PRO" id="PR:Q10925"/>
<dbReference type="Proteomes" id="UP000001940">
    <property type="component" value="Chromosome X"/>
</dbReference>
<dbReference type="Bgee" id="WBGene00002207">
    <property type="expression patterns" value="Expressed in pharyngeal muscle cell (C elegans) and 3 other cell types or tissues"/>
</dbReference>
<dbReference type="GO" id="GO:0005737">
    <property type="term" value="C:cytoplasm"/>
    <property type="evidence" value="ECO:0000314"/>
    <property type="project" value="WormBase"/>
</dbReference>
<dbReference type="GO" id="GO:0005886">
    <property type="term" value="C:plasma membrane"/>
    <property type="evidence" value="ECO:0000318"/>
    <property type="project" value="GO_Central"/>
</dbReference>
<dbReference type="GO" id="GO:0005524">
    <property type="term" value="F:ATP binding"/>
    <property type="evidence" value="ECO:0007669"/>
    <property type="project" value="UniProtKB-KW"/>
</dbReference>
<dbReference type="GO" id="GO:0004715">
    <property type="term" value="F:non-membrane spanning protein tyrosine kinase activity"/>
    <property type="evidence" value="ECO:0007669"/>
    <property type="project" value="UniProtKB-EC"/>
</dbReference>
<dbReference type="GO" id="GO:0004713">
    <property type="term" value="F:protein tyrosine kinase activity"/>
    <property type="evidence" value="ECO:0000318"/>
    <property type="project" value="GO_Central"/>
</dbReference>
<dbReference type="GO" id="GO:0035194">
    <property type="term" value="P:regulatory ncRNA-mediated post-transcriptional gene silencing"/>
    <property type="evidence" value="ECO:0000315"/>
    <property type="project" value="WormBase"/>
</dbReference>
<dbReference type="CDD" id="cd05040">
    <property type="entry name" value="PTKc_Ack_like"/>
    <property type="match status" value="1"/>
</dbReference>
<dbReference type="CDD" id="cd09539">
    <property type="entry name" value="SAM_TNK-like"/>
    <property type="match status" value="1"/>
</dbReference>
<dbReference type="CDD" id="cd00174">
    <property type="entry name" value="SH3"/>
    <property type="match status" value="1"/>
</dbReference>
<dbReference type="FunFam" id="4.10.680.10:FF:000001">
    <property type="entry name" value="activated CDC42 kinase 1 isoform X1"/>
    <property type="match status" value="1"/>
</dbReference>
<dbReference type="FunFam" id="1.10.510.10:FF:000521">
    <property type="entry name" value="Tyrosine-protein kinase pr2"/>
    <property type="match status" value="1"/>
</dbReference>
<dbReference type="Gene3D" id="4.10.680.10">
    <property type="entry name" value="Cdc42-like binding domain"/>
    <property type="match status" value="1"/>
</dbReference>
<dbReference type="Gene3D" id="2.30.30.40">
    <property type="entry name" value="SH3 Domains"/>
    <property type="match status" value="1"/>
</dbReference>
<dbReference type="Gene3D" id="1.10.510.10">
    <property type="entry name" value="Transferase(Phosphotransferase) domain 1"/>
    <property type="match status" value="1"/>
</dbReference>
<dbReference type="InterPro" id="IPR055175">
    <property type="entry name" value="ACK/TNK-like_SAM"/>
</dbReference>
<dbReference type="InterPro" id="IPR015116">
    <property type="entry name" value="Cdc42-bd-like"/>
</dbReference>
<dbReference type="InterPro" id="IPR037085">
    <property type="entry name" value="Cdc42-bd-like_dom_sf"/>
</dbReference>
<dbReference type="InterPro" id="IPR011009">
    <property type="entry name" value="Kinase-like_dom_sf"/>
</dbReference>
<dbReference type="InterPro" id="IPR050198">
    <property type="entry name" value="Non-receptor_tyrosine_kinases"/>
</dbReference>
<dbReference type="InterPro" id="IPR000719">
    <property type="entry name" value="Prot_kinase_dom"/>
</dbReference>
<dbReference type="InterPro" id="IPR017441">
    <property type="entry name" value="Protein_kinase_ATP_BS"/>
</dbReference>
<dbReference type="InterPro" id="IPR001245">
    <property type="entry name" value="Ser-Thr/Tyr_kinase_cat_dom"/>
</dbReference>
<dbReference type="InterPro" id="IPR036028">
    <property type="entry name" value="SH3-like_dom_sf"/>
</dbReference>
<dbReference type="InterPro" id="IPR001452">
    <property type="entry name" value="SH3_domain"/>
</dbReference>
<dbReference type="InterPro" id="IPR049587">
    <property type="entry name" value="TNK-like_SAM"/>
</dbReference>
<dbReference type="InterPro" id="IPR008266">
    <property type="entry name" value="Tyr_kinase_AS"/>
</dbReference>
<dbReference type="InterPro" id="IPR020635">
    <property type="entry name" value="Tyr_kinase_cat_dom"/>
</dbReference>
<dbReference type="PANTHER" id="PTHR24418">
    <property type="entry name" value="TYROSINE-PROTEIN KINASE"/>
    <property type="match status" value="1"/>
</dbReference>
<dbReference type="Pfam" id="PF09027">
    <property type="entry name" value="GTPase_binding"/>
    <property type="match status" value="1"/>
</dbReference>
<dbReference type="Pfam" id="PF07714">
    <property type="entry name" value="PK_Tyr_Ser-Thr"/>
    <property type="match status" value="1"/>
</dbReference>
<dbReference type="Pfam" id="PF22931">
    <property type="entry name" value="SAM_TNK"/>
    <property type="match status" value="1"/>
</dbReference>
<dbReference type="Pfam" id="PF07653">
    <property type="entry name" value="SH3_2"/>
    <property type="match status" value="1"/>
</dbReference>
<dbReference type="PRINTS" id="PR00109">
    <property type="entry name" value="TYRKINASE"/>
</dbReference>
<dbReference type="SMART" id="SM00326">
    <property type="entry name" value="SH3"/>
    <property type="match status" value="1"/>
</dbReference>
<dbReference type="SMART" id="SM00219">
    <property type="entry name" value="TyrKc"/>
    <property type="match status" value="1"/>
</dbReference>
<dbReference type="SUPFAM" id="SSF56112">
    <property type="entry name" value="Protein kinase-like (PK-like)"/>
    <property type="match status" value="1"/>
</dbReference>
<dbReference type="SUPFAM" id="SSF50044">
    <property type="entry name" value="SH3-domain"/>
    <property type="match status" value="1"/>
</dbReference>
<dbReference type="PROSITE" id="PS00107">
    <property type="entry name" value="PROTEIN_KINASE_ATP"/>
    <property type="match status" value="1"/>
</dbReference>
<dbReference type="PROSITE" id="PS50011">
    <property type="entry name" value="PROTEIN_KINASE_DOM"/>
    <property type="match status" value="1"/>
</dbReference>
<dbReference type="PROSITE" id="PS00109">
    <property type="entry name" value="PROTEIN_KINASE_TYR"/>
    <property type="match status" value="1"/>
</dbReference>
<dbReference type="PROSITE" id="PS50002">
    <property type="entry name" value="SH3"/>
    <property type="match status" value="1"/>
</dbReference>